<protein>
    <recommendedName>
        <fullName evidence="2">Elongation factor Tu</fullName>
        <shortName evidence="2">EF-Tu</shortName>
        <ecNumber evidence="2">3.6.5.3</ecNumber>
    </recommendedName>
</protein>
<organism>
    <name type="scientific">Clavibacter michiganensis subsp. michiganensis (strain NCPPB 382)</name>
    <dbReference type="NCBI Taxonomy" id="443906"/>
    <lineage>
        <taxon>Bacteria</taxon>
        <taxon>Bacillati</taxon>
        <taxon>Actinomycetota</taxon>
        <taxon>Actinomycetes</taxon>
        <taxon>Micrococcales</taxon>
        <taxon>Microbacteriaceae</taxon>
        <taxon>Clavibacter</taxon>
    </lineage>
</organism>
<keyword id="KW-0963">Cytoplasm</keyword>
<keyword id="KW-0251">Elongation factor</keyword>
<keyword id="KW-0342">GTP-binding</keyword>
<keyword id="KW-0378">Hydrolase</keyword>
<keyword id="KW-0460">Magnesium</keyword>
<keyword id="KW-0479">Metal-binding</keyword>
<keyword id="KW-0547">Nucleotide-binding</keyword>
<keyword id="KW-0648">Protein biosynthesis</keyword>
<dbReference type="EC" id="3.6.5.3" evidence="2"/>
<dbReference type="EMBL" id="AM711867">
    <property type="protein sequence ID" value="CAN02703.1"/>
    <property type="molecule type" value="Genomic_DNA"/>
</dbReference>
<dbReference type="RefSeq" id="WP_012039309.1">
    <property type="nucleotide sequence ID" value="NC_009480.1"/>
</dbReference>
<dbReference type="SMR" id="A5CUB6"/>
<dbReference type="GeneID" id="92948623"/>
<dbReference type="KEGG" id="cmi:CMM_2620"/>
<dbReference type="eggNOG" id="COG0050">
    <property type="taxonomic scope" value="Bacteria"/>
</dbReference>
<dbReference type="HOGENOM" id="CLU_007265_0_0_11"/>
<dbReference type="OrthoDB" id="9803139at2"/>
<dbReference type="Proteomes" id="UP000001564">
    <property type="component" value="Chromosome"/>
</dbReference>
<dbReference type="GO" id="GO:0005829">
    <property type="term" value="C:cytosol"/>
    <property type="evidence" value="ECO:0007669"/>
    <property type="project" value="TreeGrafter"/>
</dbReference>
<dbReference type="GO" id="GO:0005525">
    <property type="term" value="F:GTP binding"/>
    <property type="evidence" value="ECO:0007669"/>
    <property type="project" value="UniProtKB-UniRule"/>
</dbReference>
<dbReference type="GO" id="GO:0003924">
    <property type="term" value="F:GTPase activity"/>
    <property type="evidence" value="ECO:0007669"/>
    <property type="project" value="InterPro"/>
</dbReference>
<dbReference type="GO" id="GO:0003746">
    <property type="term" value="F:translation elongation factor activity"/>
    <property type="evidence" value="ECO:0007669"/>
    <property type="project" value="UniProtKB-UniRule"/>
</dbReference>
<dbReference type="CDD" id="cd01884">
    <property type="entry name" value="EF_Tu"/>
    <property type="match status" value="1"/>
</dbReference>
<dbReference type="CDD" id="cd03697">
    <property type="entry name" value="EFTU_II"/>
    <property type="match status" value="1"/>
</dbReference>
<dbReference type="CDD" id="cd03707">
    <property type="entry name" value="EFTU_III"/>
    <property type="match status" value="1"/>
</dbReference>
<dbReference type="FunFam" id="2.40.30.10:FF:000001">
    <property type="entry name" value="Elongation factor Tu"/>
    <property type="match status" value="1"/>
</dbReference>
<dbReference type="FunFam" id="3.40.50.300:FF:000003">
    <property type="entry name" value="Elongation factor Tu"/>
    <property type="match status" value="1"/>
</dbReference>
<dbReference type="Gene3D" id="3.40.50.300">
    <property type="entry name" value="P-loop containing nucleotide triphosphate hydrolases"/>
    <property type="match status" value="1"/>
</dbReference>
<dbReference type="Gene3D" id="2.40.30.10">
    <property type="entry name" value="Translation factors"/>
    <property type="match status" value="2"/>
</dbReference>
<dbReference type="HAMAP" id="MF_00118_B">
    <property type="entry name" value="EF_Tu_B"/>
    <property type="match status" value="1"/>
</dbReference>
<dbReference type="InterPro" id="IPR041709">
    <property type="entry name" value="EF-Tu_GTP-bd"/>
</dbReference>
<dbReference type="InterPro" id="IPR050055">
    <property type="entry name" value="EF-Tu_GTPase"/>
</dbReference>
<dbReference type="InterPro" id="IPR004161">
    <property type="entry name" value="EFTu-like_2"/>
</dbReference>
<dbReference type="InterPro" id="IPR033720">
    <property type="entry name" value="EFTU_2"/>
</dbReference>
<dbReference type="InterPro" id="IPR031157">
    <property type="entry name" value="G_TR_CS"/>
</dbReference>
<dbReference type="InterPro" id="IPR027417">
    <property type="entry name" value="P-loop_NTPase"/>
</dbReference>
<dbReference type="InterPro" id="IPR005225">
    <property type="entry name" value="Small_GTP-bd"/>
</dbReference>
<dbReference type="InterPro" id="IPR000795">
    <property type="entry name" value="T_Tr_GTP-bd_dom"/>
</dbReference>
<dbReference type="InterPro" id="IPR009000">
    <property type="entry name" value="Transl_B-barrel_sf"/>
</dbReference>
<dbReference type="InterPro" id="IPR009001">
    <property type="entry name" value="Transl_elong_EF1A/Init_IF2_C"/>
</dbReference>
<dbReference type="InterPro" id="IPR004541">
    <property type="entry name" value="Transl_elong_EFTu/EF1A_bac/org"/>
</dbReference>
<dbReference type="InterPro" id="IPR004160">
    <property type="entry name" value="Transl_elong_EFTu/EF1A_C"/>
</dbReference>
<dbReference type="NCBIfam" id="TIGR00485">
    <property type="entry name" value="EF-Tu"/>
    <property type="match status" value="1"/>
</dbReference>
<dbReference type="NCBIfam" id="NF000766">
    <property type="entry name" value="PRK00049.1"/>
    <property type="match status" value="1"/>
</dbReference>
<dbReference type="NCBIfam" id="NF009372">
    <property type="entry name" value="PRK12735.1"/>
    <property type="match status" value="1"/>
</dbReference>
<dbReference type="NCBIfam" id="NF009373">
    <property type="entry name" value="PRK12736.1"/>
    <property type="match status" value="1"/>
</dbReference>
<dbReference type="NCBIfam" id="TIGR00231">
    <property type="entry name" value="small_GTP"/>
    <property type="match status" value="1"/>
</dbReference>
<dbReference type="PANTHER" id="PTHR43721:SF22">
    <property type="entry name" value="ELONGATION FACTOR TU, MITOCHONDRIAL"/>
    <property type="match status" value="1"/>
</dbReference>
<dbReference type="PANTHER" id="PTHR43721">
    <property type="entry name" value="ELONGATION FACTOR TU-RELATED"/>
    <property type="match status" value="1"/>
</dbReference>
<dbReference type="Pfam" id="PF00009">
    <property type="entry name" value="GTP_EFTU"/>
    <property type="match status" value="1"/>
</dbReference>
<dbReference type="Pfam" id="PF03144">
    <property type="entry name" value="GTP_EFTU_D2"/>
    <property type="match status" value="1"/>
</dbReference>
<dbReference type="Pfam" id="PF03143">
    <property type="entry name" value="GTP_EFTU_D3"/>
    <property type="match status" value="1"/>
</dbReference>
<dbReference type="PRINTS" id="PR00315">
    <property type="entry name" value="ELONGATNFCT"/>
</dbReference>
<dbReference type="SUPFAM" id="SSF50465">
    <property type="entry name" value="EF-Tu/eEF-1alpha/eIF2-gamma C-terminal domain"/>
    <property type="match status" value="1"/>
</dbReference>
<dbReference type="SUPFAM" id="SSF52540">
    <property type="entry name" value="P-loop containing nucleoside triphosphate hydrolases"/>
    <property type="match status" value="1"/>
</dbReference>
<dbReference type="SUPFAM" id="SSF50447">
    <property type="entry name" value="Translation proteins"/>
    <property type="match status" value="1"/>
</dbReference>
<dbReference type="PROSITE" id="PS00301">
    <property type="entry name" value="G_TR_1"/>
    <property type="match status" value="1"/>
</dbReference>
<dbReference type="PROSITE" id="PS51722">
    <property type="entry name" value="G_TR_2"/>
    <property type="match status" value="1"/>
</dbReference>
<accession>A5CUB6</accession>
<evidence type="ECO:0000250" key="1"/>
<evidence type="ECO:0000255" key="2">
    <source>
        <dbReference type="HAMAP-Rule" id="MF_00118"/>
    </source>
</evidence>
<sequence>MGKAKFERTKPHVNIGTIGHVDHGKTTLTAAISKVLADKYPSATNVQRDFASIDSAPEERQRGITINISHVEYETPKRHYAHVDAPGHADYIKNMITGAAQMDGAILVVAATDGPMAQTREHVLLAKQVGVPYLLVALNKSDMVDDEEILELVELEVRELLSSQDFDGDNAPVVQVSGLKALEGDEKWVEQIVKLMDAVDESIPEPVRDKDKPFLMPVEDVFTITGRGTVVTGRAERGTLAINSDVEIVGIRPTVKTTVTGIEMFHKQLDEAWAGENCGLLLRGTKREDVERGQVIVKPGSVTPHTDFEGTAYILSKEEGGRHNPFYANYRPQFYFRTTDVTGVITLPEGTEMVMPGDTTDMNVALIQPIAMEEGLGFAIREGGRTVGAGTVTKIVK</sequence>
<reference key="1">
    <citation type="journal article" date="2008" name="J. Bacteriol.">
        <title>The genome sequence of the tomato-pathogenic actinomycete Clavibacter michiganensis subsp. michiganensis NCPPB382 reveals a large island involved in pathogenicity.</title>
        <authorList>
            <person name="Gartemann K.-H."/>
            <person name="Abt B."/>
            <person name="Bekel T."/>
            <person name="Burger A."/>
            <person name="Engemann J."/>
            <person name="Fluegel M."/>
            <person name="Gaigalat L."/>
            <person name="Goesmann A."/>
            <person name="Graefen I."/>
            <person name="Kalinowski J."/>
            <person name="Kaup O."/>
            <person name="Kirchner O."/>
            <person name="Krause L."/>
            <person name="Linke B."/>
            <person name="McHardy A."/>
            <person name="Meyer F."/>
            <person name="Pohle S."/>
            <person name="Rueckert C."/>
            <person name="Schneiker S."/>
            <person name="Zellermann E.-M."/>
            <person name="Puehler A."/>
            <person name="Eichenlaub R."/>
            <person name="Kaiser O."/>
            <person name="Bartels D."/>
        </authorList>
    </citation>
    <scope>NUCLEOTIDE SEQUENCE [LARGE SCALE GENOMIC DNA]</scope>
    <source>
        <strain>NCPPB 382</strain>
    </source>
</reference>
<proteinExistence type="inferred from homology"/>
<gene>
    <name evidence="2" type="primary">tuf</name>
    <name type="ordered locus">CMM_2620</name>
</gene>
<name>EFTU_CLAM3</name>
<comment type="function">
    <text evidence="2">GTP hydrolase that promotes the GTP-dependent binding of aminoacyl-tRNA to the A-site of ribosomes during protein biosynthesis.</text>
</comment>
<comment type="catalytic activity">
    <reaction evidence="2">
        <text>GTP + H2O = GDP + phosphate + H(+)</text>
        <dbReference type="Rhea" id="RHEA:19669"/>
        <dbReference type="ChEBI" id="CHEBI:15377"/>
        <dbReference type="ChEBI" id="CHEBI:15378"/>
        <dbReference type="ChEBI" id="CHEBI:37565"/>
        <dbReference type="ChEBI" id="CHEBI:43474"/>
        <dbReference type="ChEBI" id="CHEBI:58189"/>
        <dbReference type="EC" id="3.6.5.3"/>
    </reaction>
    <physiologicalReaction direction="left-to-right" evidence="2">
        <dbReference type="Rhea" id="RHEA:19670"/>
    </physiologicalReaction>
</comment>
<comment type="subunit">
    <text evidence="2">Monomer.</text>
</comment>
<comment type="subcellular location">
    <subcellularLocation>
        <location evidence="2">Cytoplasm</location>
    </subcellularLocation>
</comment>
<comment type="similarity">
    <text evidence="2">Belongs to the TRAFAC class translation factor GTPase superfamily. Classic translation factor GTPase family. EF-Tu/EF-1A subfamily.</text>
</comment>
<feature type="chain" id="PRO_1000015639" description="Elongation factor Tu">
    <location>
        <begin position="1"/>
        <end position="397"/>
    </location>
</feature>
<feature type="domain" description="tr-type G">
    <location>
        <begin position="10"/>
        <end position="207"/>
    </location>
</feature>
<feature type="region of interest" description="G1" evidence="1">
    <location>
        <begin position="19"/>
        <end position="26"/>
    </location>
</feature>
<feature type="region of interest" description="G2" evidence="1">
    <location>
        <begin position="63"/>
        <end position="67"/>
    </location>
</feature>
<feature type="region of interest" description="G3" evidence="1">
    <location>
        <begin position="84"/>
        <end position="87"/>
    </location>
</feature>
<feature type="region of interest" description="G4" evidence="1">
    <location>
        <begin position="139"/>
        <end position="142"/>
    </location>
</feature>
<feature type="region of interest" description="G5" evidence="1">
    <location>
        <begin position="177"/>
        <end position="179"/>
    </location>
</feature>
<feature type="binding site" evidence="2">
    <location>
        <begin position="19"/>
        <end position="26"/>
    </location>
    <ligand>
        <name>GTP</name>
        <dbReference type="ChEBI" id="CHEBI:37565"/>
    </ligand>
</feature>
<feature type="binding site" evidence="2">
    <location>
        <position position="26"/>
    </location>
    <ligand>
        <name>Mg(2+)</name>
        <dbReference type="ChEBI" id="CHEBI:18420"/>
    </ligand>
</feature>
<feature type="binding site" evidence="2">
    <location>
        <begin position="84"/>
        <end position="88"/>
    </location>
    <ligand>
        <name>GTP</name>
        <dbReference type="ChEBI" id="CHEBI:37565"/>
    </ligand>
</feature>
<feature type="binding site" evidence="2">
    <location>
        <begin position="139"/>
        <end position="142"/>
    </location>
    <ligand>
        <name>GTP</name>
        <dbReference type="ChEBI" id="CHEBI:37565"/>
    </ligand>
</feature>